<feature type="chain" id="PRO_0000105875" description="Probable spore germination protein GerPF">
    <location>
        <begin position="1"/>
        <end position="71"/>
    </location>
</feature>
<dbReference type="EMBL" id="AF053927">
    <property type="protein sequence ID" value="AAC08017.1"/>
    <property type="molecule type" value="Genomic_DNA"/>
</dbReference>
<dbReference type="RefSeq" id="WP_001141566.1">
    <property type="nucleotide sequence ID" value="NZ_WBPP01000037.1"/>
</dbReference>
<dbReference type="GeneID" id="93009899"/>
<dbReference type="OMA" id="MPIVINH"/>
<dbReference type="OrthoDB" id="2476480at2"/>
<dbReference type="GO" id="GO:0030435">
    <property type="term" value="P:sporulation resulting in formation of a cellular spore"/>
    <property type="evidence" value="ECO:0007669"/>
    <property type="project" value="UniProtKB-KW"/>
</dbReference>
<dbReference type="InterPro" id="IPR019618">
    <property type="entry name" value="Spore_germination_GerPA"/>
</dbReference>
<dbReference type="PANTHER" id="PTHR37808:SF1">
    <property type="entry name" value="SPORE GERMINATION PROTEIN-LIKE PROTEIN YDZR"/>
    <property type="match status" value="1"/>
</dbReference>
<dbReference type="PANTHER" id="PTHR37808">
    <property type="entry name" value="SPORE GERMINATION PROTEIN-LIKE PROTEIN YDZR-RELATED"/>
    <property type="match status" value="1"/>
</dbReference>
<dbReference type="Pfam" id="PF10676">
    <property type="entry name" value="gerPA"/>
    <property type="match status" value="1"/>
</dbReference>
<accession>P62183</accession>
<accession>O68688</accession>
<name>GERPF_BACCE</name>
<evidence type="ECO:0000305" key="1"/>
<sequence length="71" mass="7351">MPSVVGNLVVQNSNGSFNLGDFYNVSPKENTKAYNGSGASNVGFVVNTFNGVSATNTFDSDVADQDQIGTA</sequence>
<reference key="1">
    <citation type="journal article" date="2000" name="J. Bacteriol.">
        <title>Mutations in the gerP locus of Bacillus subtilis and Bacillus cereus affect access of germinants to their targets in spores.</title>
        <authorList>
            <person name="Behravan J."/>
            <person name="Chirakkal H."/>
            <person name="Masson A."/>
            <person name="Moir A."/>
        </authorList>
    </citation>
    <scope>NUCLEOTIDE SEQUENCE [GENOMIC DNA]</scope>
    <scope>CHARACTERIZATION</scope>
    <source>
        <strain>ATCC 10876 / DSM 9378 / NRRL B-569</strain>
    </source>
</reference>
<keyword id="KW-0309">Germination</keyword>
<keyword id="KW-0749">Sporulation</keyword>
<organism>
    <name type="scientific">Bacillus cereus</name>
    <dbReference type="NCBI Taxonomy" id="1396"/>
    <lineage>
        <taxon>Bacteria</taxon>
        <taxon>Bacillati</taxon>
        <taxon>Bacillota</taxon>
        <taxon>Bacilli</taxon>
        <taxon>Bacillales</taxon>
        <taxon>Bacillaceae</taxon>
        <taxon>Bacillus</taxon>
        <taxon>Bacillus cereus group</taxon>
    </lineage>
</organism>
<comment type="function">
    <text>Required for the formation of functionally normal spores. Could be involved in the establishment of normal spore coat structure and/or permeability, which allows the access of germinants to their receptor.</text>
</comment>
<comment type="developmental stage">
    <text>Expressed during sporulation, around the time of spore coat synthesis and assembly, in mother cell compartment.</text>
</comment>
<comment type="induction">
    <text>Expression is sigma K-dependent and negatively regulated by GerE.</text>
</comment>
<comment type="similarity">
    <text evidence="1">Belongs to the GerPA/GerPF family.</text>
</comment>
<protein>
    <recommendedName>
        <fullName>Probable spore germination protein GerPF</fullName>
    </recommendedName>
</protein>
<proteinExistence type="evidence at protein level"/>
<gene>
    <name type="primary">gerPF</name>
</gene>